<organism>
    <name type="scientific">Bombyx mori</name>
    <name type="common">Silk moth</name>
    <dbReference type="NCBI Taxonomy" id="7091"/>
    <lineage>
        <taxon>Eukaryota</taxon>
        <taxon>Metazoa</taxon>
        <taxon>Ecdysozoa</taxon>
        <taxon>Arthropoda</taxon>
        <taxon>Hexapoda</taxon>
        <taxon>Insecta</taxon>
        <taxon>Pterygota</taxon>
        <taxon>Neoptera</taxon>
        <taxon>Endopterygota</taxon>
        <taxon>Lepidoptera</taxon>
        <taxon>Glossata</taxon>
        <taxon>Ditrysia</taxon>
        <taxon>Bombycoidea</taxon>
        <taxon>Bombycidae</taxon>
        <taxon>Bombycinae</taxon>
        <taxon>Bombyx</taxon>
    </lineage>
</organism>
<feature type="chain" id="PRO_0000439352" description="Pre-piRNA 3'-exonuclease trimmer">
    <location>
        <begin position="1"/>
        <end position="532"/>
    </location>
</feature>
<feature type="transmembrane region" description="Helical" evidence="2">
    <location>
        <begin position="503"/>
        <end position="523"/>
    </location>
</feature>
<feature type="binding site" evidence="1">
    <location>
        <position position="28"/>
    </location>
    <ligand>
        <name>Mg(2+)</name>
        <dbReference type="ChEBI" id="CHEBI:18420"/>
        <note>catalytic</note>
    </ligand>
</feature>
<feature type="binding site" evidence="1">
    <location>
        <position position="30"/>
    </location>
    <ligand>
        <name>Mg(2+)</name>
        <dbReference type="ChEBI" id="CHEBI:18420"/>
        <note>catalytic</note>
    </ligand>
</feature>
<feature type="binding site" evidence="1">
    <location>
        <position position="270"/>
    </location>
    <ligand>
        <name>Mg(2+)</name>
        <dbReference type="ChEBI" id="CHEBI:18420"/>
        <note>catalytic</note>
    </ligand>
</feature>
<feature type="binding site" evidence="1">
    <location>
        <position position="365"/>
    </location>
    <ligand>
        <name>Mg(2+)</name>
        <dbReference type="ChEBI" id="CHEBI:18420"/>
        <note>catalytic</note>
    </ligand>
</feature>
<feature type="mutagenesis site" description="Catalytically inactive mutant; strongly reduced trimming reaction." evidence="3">
    <original>E</original>
    <variation>A</variation>
    <location>
        <position position="30"/>
    </location>
</feature>
<sequence length="532" mass="61318">MDITKENYYEELDNIAKNIKDSCFISFDAEFSAILTKESFKYSLFDTNEERYNKYKTQISTMKMMQVGLTMFQYDRELDAYLATGYTFHLCPQLIGTINQSLIFQASTLKFLCKHNFDFNKFIYEGLPYLSKSDEALLNRYRIENNLFDYVSESLEFDEEKQINQCSSEVSKWLSSSIEDTMYLDIDNAICRYLLHLELRQRYPGILTTDSLGNSKKILIYRDKNVEGAKNAPIAILEDNLIAYLLGFLHVIKLLETHKKPIVGHNMFLDMLFLHNQFIGPLPDSYTMFKKNINSVFPTIFDTKYISHAMSKKLTFSESWKSNALQDLYEFFAERKCKKLEYGINIVRLTTPFDIKQSYHEAGWDAYCSGYCFIRLGHWAACENRGKSHVIGPREKLAALAPYCNKVNVIRGGVSYMNFSENDPPRNRPVLLHVKCLKDTVIDVEKVASLLGSFGSIDIKPCGKRAALVATGAQFMVDKILKTYENNRDYRISKYSVYKHSVAGRFAIWSGSIVTGGLALYLIHKKFKSILL</sequence>
<name>TRIMR_BOMMO</name>
<gene>
    <name evidence="4" type="primary">PNLDC1</name>
</gene>
<accession>H9JAQ7</accession>
<dbReference type="EC" id="3.1.13.-" evidence="3"/>
<dbReference type="EMBL" id="BABH01008568">
    <property type="status" value="NOT_ANNOTATED_CDS"/>
    <property type="molecule type" value="Genomic_DNA"/>
</dbReference>
<dbReference type="EMBL" id="BABH01008569">
    <property type="status" value="NOT_ANNOTATED_CDS"/>
    <property type="molecule type" value="Genomic_DNA"/>
</dbReference>
<dbReference type="SMR" id="H9JAQ7"/>
<dbReference type="STRING" id="7091.H9JAQ7"/>
<dbReference type="PaxDb" id="7091-BGIBMGA006602-TA"/>
<dbReference type="EnsemblMetazoa" id="XM_004930454.4">
    <property type="protein sequence ID" value="XP_004930511.1"/>
    <property type="gene ID" value="LOC101738496"/>
</dbReference>
<dbReference type="GeneID" id="101738496"/>
<dbReference type="KEGG" id="bmor:101738496"/>
<dbReference type="eggNOG" id="KOG1990">
    <property type="taxonomic scope" value="Eukaryota"/>
</dbReference>
<dbReference type="HOGENOM" id="CLU_018030_2_0_1"/>
<dbReference type="InParanoid" id="H9JAQ7"/>
<dbReference type="OrthoDB" id="432036at7088"/>
<dbReference type="Proteomes" id="UP000005204">
    <property type="component" value="Unassembled WGS sequence"/>
</dbReference>
<dbReference type="GO" id="GO:0005783">
    <property type="term" value="C:endoplasmic reticulum"/>
    <property type="evidence" value="ECO:0007669"/>
    <property type="project" value="TreeGrafter"/>
</dbReference>
<dbReference type="GO" id="GO:0005741">
    <property type="term" value="C:mitochondrial outer membrane"/>
    <property type="evidence" value="ECO:0007669"/>
    <property type="project" value="UniProtKB-SubCell"/>
</dbReference>
<dbReference type="GO" id="GO:0005739">
    <property type="term" value="C:mitochondrion"/>
    <property type="evidence" value="ECO:0000314"/>
    <property type="project" value="UniProtKB"/>
</dbReference>
<dbReference type="GO" id="GO:0005634">
    <property type="term" value="C:nucleus"/>
    <property type="evidence" value="ECO:0007669"/>
    <property type="project" value="TreeGrafter"/>
</dbReference>
<dbReference type="GO" id="GO:0000175">
    <property type="term" value="F:3'-5'-RNA exonuclease activity"/>
    <property type="evidence" value="ECO:0000314"/>
    <property type="project" value="UniProtKB"/>
</dbReference>
<dbReference type="GO" id="GO:0046872">
    <property type="term" value="F:metal ion binding"/>
    <property type="evidence" value="ECO:0007669"/>
    <property type="project" value="UniProtKB-KW"/>
</dbReference>
<dbReference type="GO" id="GO:0003723">
    <property type="term" value="F:RNA binding"/>
    <property type="evidence" value="ECO:0007669"/>
    <property type="project" value="UniProtKB-KW"/>
</dbReference>
<dbReference type="GO" id="GO:0000289">
    <property type="term" value="P:nuclear-transcribed mRNA poly(A) tail shortening"/>
    <property type="evidence" value="ECO:0007669"/>
    <property type="project" value="TreeGrafter"/>
</dbReference>
<dbReference type="GO" id="GO:0034587">
    <property type="term" value="P:piRNA processing"/>
    <property type="evidence" value="ECO:0000314"/>
    <property type="project" value="UniProtKB"/>
</dbReference>
<dbReference type="GO" id="GO:1990431">
    <property type="term" value="P:priRNA 3'-end processing"/>
    <property type="evidence" value="ECO:0007669"/>
    <property type="project" value="TreeGrafter"/>
</dbReference>
<dbReference type="GO" id="GO:1990432">
    <property type="term" value="P:siRNA 3'-end processing"/>
    <property type="evidence" value="ECO:0007669"/>
    <property type="project" value="TreeGrafter"/>
</dbReference>
<dbReference type="Gene3D" id="3.30.420.10">
    <property type="entry name" value="Ribonuclease H-like superfamily/Ribonuclease H"/>
    <property type="match status" value="2"/>
</dbReference>
<dbReference type="InterPro" id="IPR051181">
    <property type="entry name" value="CAF1_poly(A)_ribonucleases"/>
</dbReference>
<dbReference type="InterPro" id="IPR006941">
    <property type="entry name" value="RNase_CAF1"/>
</dbReference>
<dbReference type="InterPro" id="IPR012337">
    <property type="entry name" value="RNaseH-like_sf"/>
</dbReference>
<dbReference type="InterPro" id="IPR036397">
    <property type="entry name" value="RNaseH_sf"/>
</dbReference>
<dbReference type="PANTHER" id="PTHR15092">
    <property type="entry name" value="POLY A -SPECIFIC RIBONUCLEASE/TARGET OF EGR1, MEMBER 1"/>
    <property type="match status" value="1"/>
</dbReference>
<dbReference type="PANTHER" id="PTHR15092:SF22">
    <property type="entry name" value="POLY(A)-SPECIFIC RIBONUCLEASE PNLDC1"/>
    <property type="match status" value="1"/>
</dbReference>
<dbReference type="Pfam" id="PF04857">
    <property type="entry name" value="CAF1"/>
    <property type="match status" value="1"/>
</dbReference>
<dbReference type="SUPFAM" id="SSF53098">
    <property type="entry name" value="Ribonuclease H-like"/>
    <property type="match status" value="1"/>
</dbReference>
<comment type="function">
    <text evidence="3">3'-5' exonuclease that specifically cleaves precursor piRNAs (pre-piRNAs) at their 3' ends (PubMed:26919431). Trims pre-piRNAs to their mature size, a process required for piRNAs maturation and stabilization, and subsequent pre-piRNAs 2'-O-methylation (PubMed:26919431). The piRNA metabolic process mediates the repression of transposable elements during meiosis by forming complexes composed of piRNAs and Piwi proteins and govern the methylation and subsequent repression of transposons (PubMed:26919431).</text>
</comment>
<comment type="cofactor">
    <cofactor evidence="6">
        <name>Mg(2+)</name>
        <dbReference type="ChEBI" id="CHEBI:18420"/>
    </cofactor>
</comment>
<comment type="subunit">
    <text evidence="3">Interacts with Papi/Tdrkh; interaction takes place on the mitochondrial surface and recruits PNLDC1/trimmer to PIWI-bound pre-piRNAs.</text>
</comment>
<comment type="subcellular location">
    <subcellularLocation>
        <location evidence="6">Mitochondrion outer membrane</location>
        <topology evidence="2">Single-pass membrane protein</topology>
    </subcellularLocation>
</comment>
<comment type="similarity">
    <text evidence="5">Belongs to the CAF1 family.</text>
</comment>
<protein>
    <recommendedName>
        <fullName evidence="6">Pre-piRNA 3'-exonuclease trimmer</fullName>
        <ecNumber evidence="3">3.1.13.-</ecNumber>
    </recommendedName>
    <alternativeName>
        <fullName evidence="4">PARN-like domain-containing protein 1 homolog</fullName>
        <shortName evidence="4">BmPNLDC1</shortName>
    </alternativeName>
</protein>
<keyword id="KW-0269">Exonuclease</keyword>
<keyword id="KW-0378">Hydrolase</keyword>
<keyword id="KW-0460">Magnesium</keyword>
<keyword id="KW-0472">Membrane</keyword>
<keyword id="KW-0479">Metal-binding</keyword>
<keyword id="KW-0496">Mitochondrion</keyword>
<keyword id="KW-1000">Mitochondrion outer membrane</keyword>
<keyword id="KW-0540">Nuclease</keyword>
<keyword id="KW-1185">Reference proteome</keyword>
<keyword id="KW-0694">RNA-binding</keyword>
<keyword id="KW-0943">RNA-mediated gene silencing</keyword>
<keyword id="KW-0812">Transmembrane</keyword>
<keyword id="KW-1133">Transmembrane helix</keyword>
<reference key="1">
    <citation type="journal article" date="2008" name="Insect Biochem. Mol. Biol.">
        <title>The genome of a lepidopteran model insect, the silkworm Bombyx mori.</title>
        <authorList>
            <consortium name="International Silkworm Genome Consortium"/>
        </authorList>
    </citation>
    <scope>NUCLEOTIDE SEQUENCE [LARGE SCALE GENOMIC DNA]</scope>
    <source>
        <strain>p50T</strain>
    </source>
</reference>
<reference key="2">
    <citation type="journal article" date="2016" name="Cell">
        <title>Identification and functional analysis of the pre-piRNA 3' trimmer in silkworms.</title>
        <authorList>
            <person name="Izumi N."/>
            <person name="Shoji K."/>
            <person name="Sakaguchi Y."/>
            <person name="Honda S."/>
            <person name="Kirino Y."/>
            <person name="Suzuki T."/>
            <person name="Katsuma S."/>
            <person name="Tomari Y."/>
        </authorList>
    </citation>
    <scope>FUNCTION</scope>
    <scope>SUBCELLULAR LOCATION</scope>
    <scope>INTERACTION WITH PAPI</scope>
    <scope>MUTAGENESIS OF GLU-30</scope>
</reference>
<evidence type="ECO:0000250" key="1">
    <source>
        <dbReference type="UniProtKB" id="O95453"/>
    </source>
</evidence>
<evidence type="ECO:0000255" key="2"/>
<evidence type="ECO:0000269" key="3">
    <source>
    </source>
</evidence>
<evidence type="ECO:0000303" key="4">
    <source>
    </source>
</evidence>
<evidence type="ECO:0000305" key="5"/>
<evidence type="ECO:0000305" key="6">
    <source>
    </source>
</evidence>
<proteinExistence type="evidence at protein level"/>